<protein>
    <recommendedName>
        <fullName>GDSL esterase/lipase At2g27360</fullName>
        <ecNumber>3.1.1.-</ecNumber>
    </recommendedName>
    <alternativeName>
        <fullName>Extracellular lipase At2g27360</fullName>
    </alternativeName>
</protein>
<keyword id="KW-0325">Glycoprotein</keyword>
<keyword id="KW-0378">Hydrolase</keyword>
<keyword id="KW-0442">Lipid degradation</keyword>
<keyword id="KW-0443">Lipid metabolism</keyword>
<keyword id="KW-1185">Reference proteome</keyword>
<keyword id="KW-0964">Secreted</keyword>
<keyword id="KW-0732">Signal</keyword>
<feature type="signal peptide" evidence="2">
    <location>
        <begin position="1"/>
        <end position="24"/>
    </location>
</feature>
<feature type="chain" id="PRO_0000367381" description="GDSL esterase/lipase At2g27360">
    <location>
        <begin position="25"/>
        <end position="394"/>
    </location>
</feature>
<feature type="active site" description="Nucleophile" evidence="1">
    <location>
        <position position="40"/>
    </location>
</feature>
<feature type="active site" evidence="1">
    <location>
        <position position="344"/>
    </location>
</feature>
<feature type="active site" evidence="1">
    <location>
        <position position="347"/>
    </location>
</feature>
<feature type="glycosylation site" description="N-linked (GlcNAc...) asparagine" evidence="2">
    <location>
        <position position="136"/>
    </location>
</feature>
<feature type="glycosylation site" description="N-linked (GlcNAc...) asparagine" evidence="2">
    <location>
        <position position="319"/>
    </location>
</feature>
<feature type="glycosylation site" description="N-linked (GlcNAc...) asparagine" evidence="2">
    <location>
        <position position="371"/>
    </location>
</feature>
<feature type="glycosylation site" description="N-linked (GlcNAc...) asparagine" evidence="2">
    <location>
        <position position="382"/>
    </location>
</feature>
<gene>
    <name type="ordered locus">At2g27360</name>
    <name type="ORF">F12K2.6</name>
</gene>
<evidence type="ECO:0000250" key="1"/>
<evidence type="ECO:0000255" key="2"/>
<evidence type="ECO:0000305" key="3"/>
<proteinExistence type="evidence at transcript level"/>
<comment type="subcellular location">
    <subcellularLocation>
        <location evidence="3">Secreted</location>
    </subcellularLocation>
</comment>
<comment type="similarity">
    <text evidence="3">Belongs to the 'GDSL' lipolytic enzyme family.</text>
</comment>
<reference key="1">
    <citation type="journal article" date="1999" name="Nature">
        <title>Sequence and analysis of chromosome 2 of the plant Arabidopsis thaliana.</title>
        <authorList>
            <person name="Lin X."/>
            <person name="Kaul S."/>
            <person name="Rounsley S.D."/>
            <person name="Shea T.P."/>
            <person name="Benito M.-I."/>
            <person name="Town C.D."/>
            <person name="Fujii C.Y."/>
            <person name="Mason T.M."/>
            <person name="Bowman C.L."/>
            <person name="Barnstead M.E."/>
            <person name="Feldblyum T.V."/>
            <person name="Buell C.R."/>
            <person name="Ketchum K.A."/>
            <person name="Lee J.J."/>
            <person name="Ronning C.M."/>
            <person name="Koo H.L."/>
            <person name="Moffat K.S."/>
            <person name="Cronin L.A."/>
            <person name="Shen M."/>
            <person name="Pai G."/>
            <person name="Van Aken S."/>
            <person name="Umayam L."/>
            <person name="Tallon L.J."/>
            <person name="Gill J.E."/>
            <person name="Adams M.D."/>
            <person name="Carrera A.J."/>
            <person name="Creasy T.H."/>
            <person name="Goodman H.M."/>
            <person name="Somerville C.R."/>
            <person name="Copenhaver G.P."/>
            <person name="Preuss D."/>
            <person name="Nierman W.C."/>
            <person name="White O."/>
            <person name="Eisen J.A."/>
            <person name="Salzberg S.L."/>
            <person name="Fraser C.M."/>
            <person name="Venter J.C."/>
        </authorList>
    </citation>
    <scope>NUCLEOTIDE SEQUENCE [LARGE SCALE GENOMIC DNA]</scope>
    <source>
        <strain>cv. Columbia</strain>
    </source>
</reference>
<reference key="2">
    <citation type="journal article" date="2017" name="Plant J.">
        <title>Araport11: a complete reannotation of the Arabidopsis thaliana reference genome.</title>
        <authorList>
            <person name="Cheng C.Y."/>
            <person name="Krishnakumar V."/>
            <person name="Chan A.P."/>
            <person name="Thibaud-Nissen F."/>
            <person name="Schobel S."/>
            <person name="Town C.D."/>
        </authorList>
    </citation>
    <scope>GENOME REANNOTATION</scope>
    <source>
        <strain>cv. Columbia</strain>
    </source>
</reference>
<reference key="3">
    <citation type="submission" date="2004-09" db="EMBL/GenBank/DDBJ databases">
        <title>Large-scale analysis of RIKEN Arabidopsis full-length (RAFL) cDNAs.</title>
        <authorList>
            <person name="Totoki Y."/>
            <person name="Seki M."/>
            <person name="Ishida J."/>
            <person name="Nakajima M."/>
            <person name="Enju A."/>
            <person name="Kamiya A."/>
            <person name="Narusaka M."/>
            <person name="Shin-i T."/>
            <person name="Nakagawa M."/>
            <person name="Sakamoto N."/>
            <person name="Oishi K."/>
            <person name="Kohara Y."/>
            <person name="Kobayashi M."/>
            <person name="Toyoda A."/>
            <person name="Sakaki Y."/>
            <person name="Sakurai T."/>
            <person name="Iida K."/>
            <person name="Akiyama K."/>
            <person name="Satou M."/>
            <person name="Toyoda T."/>
            <person name="Konagaya A."/>
            <person name="Carninci P."/>
            <person name="Kawai J."/>
            <person name="Hayashizaki Y."/>
            <person name="Shinozaki K."/>
        </authorList>
    </citation>
    <scope>NUCLEOTIDE SEQUENCE [LARGE SCALE MRNA] OF 5-394</scope>
    <source>
        <strain>cv. Columbia</strain>
    </source>
</reference>
<reference key="4">
    <citation type="journal article" date="2004" name="Prog. Lipid Res.">
        <title>GDSL family of serine esterases/lipases.</title>
        <authorList>
            <person name="Akoh C.C."/>
            <person name="Lee G.-C."/>
            <person name="Liaw Y.-C."/>
            <person name="Huang T.-H."/>
            <person name="Shaw J.-F."/>
        </authorList>
    </citation>
    <scope>REVIEW</scope>
</reference>
<reference key="5">
    <citation type="journal article" date="2008" name="Pak. J. Biol. Sci.">
        <title>Sequence analysis of GDSL lipase gene family in Arabidopsis thaliana.</title>
        <authorList>
            <person name="Ling H."/>
        </authorList>
    </citation>
    <scope>GENE FAMILY</scope>
</reference>
<accession>Q9ZQI3</accession>
<accession>Q67XB4</accession>
<name>GDL40_ARATH</name>
<dbReference type="EC" id="3.1.1.-"/>
<dbReference type="EMBL" id="AC006232">
    <property type="protein sequence ID" value="AAM15186.1"/>
    <property type="molecule type" value="Genomic_DNA"/>
</dbReference>
<dbReference type="EMBL" id="AC006233">
    <property type="protein sequence ID" value="AAD41994.1"/>
    <property type="molecule type" value="Genomic_DNA"/>
</dbReference>
<dbReference type="EMBL" id="CP002685">
    <property type="protein sequence ID" value="AEC07985.1"/>
    <property type="molecule type" value="Genomic_DNA"/>
</dbReference>
<dbReference type="EMBL" id="AK176905">
    <property type="protein sequence ID" value="BAD44668.1"/>
    <property type="molecule type" value="mRNA"/>
</dbReference>
<dbReference type="PIR" id="A84672">
    <property type="entry name" value="A84672"/>
</dbReference>
<dbReference type="RefSeq" id="NP_180304.1">
    <property type="nucleotide sequence ID" value="NM_128295.5"/>
</dbReference>
<dbReference type="SMR" id="Q9ZQI3"/>
<dbReference type="FunCoup" id="Q9ZQI3">
    <property type="interactions" value="111"/>
</dbReference>
<dbReference type="STRING" id="3702.Q9ZQI3"/>
<dbReference type="GlyGen" id="Q9ZQI3">
    <property type="glycosylation" value="4 sites"/>
</dbReference>
<dbReference type="PaxDb" id="3702-AT2G27360.1"/>
<dbReference type="ProteomicsDB" id="247092"/>
<dbReference type="EnsemblPlants" id="AT2G27360.1">
    <property type="protein sequence ID" value="AT2G27360.1"/>
    <property type="gene ID" value="AT2G27360"/>
</dbReference>
<dbReference type="GeneID" id="817279"/>
<dbReference type="Gramene" id="AT2G27360.1">
    <property type="protein sequence ID" value="AT2G27360.1"/>
    <property type="gene ID" value="AT2G27360"/>
</dbReference>
<dbReference type="KEGG" id="ath:AT2G27360"/>
<dbReference type="Araport" id="AT2G27360"/>
<dbReference type="TAIR" id="AT2G27360"/>
<dbReference type="eggNOG" id="ENOG502QSMM">
    <property type="taxonomic scope" value="Eukaryota"/>
</dbReference>
<dbReference type="HOGENOM" id="CLU_015101_2_1_1"/>
<dbReference type="InParanoid" id="Q9ZQI3"/>
<dbReference type="OMA" id="NSETHCR"/>
<dbReference type="PhylomeDB" id="Q9ZQI3"/>
<dbReference type="BioCyc" id="ARA:AT2G27360-MONOMER"/>
<dbReference type="PRO" id="PR:Q9ZQI3"/>
<dbReference type="Proteomes" id="UP000006548">
    <property type="component" value="Chromosome 2"/>
</dbReference>
<dbReference type="ExpressionAtlas" id="Q9ZQI3">
    <property type="expression patterns" value="baseline and differential"/>
</dbReference>
<dbReference type="GO" id="GO:0005576">
    <property type="term" value="C:extracellular region"/>
    <property type="evidence" value="ECO:0007669"/>
    <property type="project" value="UniProtKB-SubCell"/>
</dbReference>
<dbReference type="GO" id="GO:0016788">
    <property type="term" value="F:hydrolase activity, acting on ester bonds"/>
    <property type="evidence" value="ECO:0007669"/>
    <property type="project" value="InterPro"/>
</dbReference>
<dbReference type="GO" id="GO:0016042">
    <property type="term" value="P:lipid catabolic process"/>
    <property type="evidence" value="ECO:0007669"/>
    <property type="project" value="UniProtKB-KW"/>
</dbReference>
<dbReference type="CDD" id="cd01837">
    <property type="entry name" value="SGNH_plant_lipase_like"/>
    <property type="match status" value="1"/>
</dbReference>
<dbReference type="Gene3D" id="3.40.50.1110">
    <property type="entry name" value="SGNH hydrolase"/>
    <property type="match status" value="1"/>
</dbReference>
<dbReference type="InterPro" id="IPR001087">
    <property type="entry name" value="GDSL"/>
</dbReference>
<dbReference type="InterPro" id="IPR036514">
    <property type="entry name" value="SGNH_hydro_sf"/>
</dbReference>
<dbReference type="InterPro" id="IPR035669">
    <property type="entry name" value="SGNH_plant_lipase-like"/>
</dbReference>
<dbReference type="PANTHER" id="PTHR22835:SF683">
    <property type="entry name" value="OS05G0506800 PROTEIN"/>
    <property type="match status" value="1"/>
</dbReference>
<dbReference type="PANTHER" id="PTHR22835">
    <property type="entry name" value="ZINC FINGER FYVE DOMAIN CONTAINING PROTEIN"/>
    <property type="match status" value="1"/>
</dbReference>
<dbReference type="Pfam" id="PF00657">
    <property type="entry name" value="Lipase_GDSL"/>
    <property type="match status" value="1"/>
</dbReference>
<dbReference type="SUPFAM" id="SSF52266">
    <property type="entry name" value="SGNH hydrolase"/>
    <property type="match status" value="1"/>
</dbReference>
<sequence length="394" mass="43854">MASQDCHMLLSFFISTFLITVVTSQTRCRNFKSIISFGDSITDTGNLLGLSSPNDLPESAFPPYGETFFHHPSGRFSDGRLIIDFIAEFLGIPHVPPFYGSKNGNFEKGVNFAVGGATALECSVLEEKGTHCSQSNISLGNQLKSFKESLPYLCGSSSPDCRDMIENAFILIGEIGGNDYNFPLFDRKNIEEVKELVPLVITTISSAISELVDMGARTFLVPGNFPLGCSVAYLTLYETPNKEEYNPLTGCLTWLNDFSVYHNEQLQAELKRLRNLYPHVNIIYGDYYNTLLRLMQEPSKFGLMDRPLPACCGLGGPYNFTFSIKCGSKGVEYCSDPSKYVNWDGIHMTEAAYKWISEGVLTGPYAIPPFNWSCLDSKIKNNESLHTQYSLMNS</sequence>
<organism>
    <name type="scientific">Arabidopsis thaliana</name>
    <name type="common">Mouse-ear cress</name>
    <dbReference type="NCBI Taxonomy" id="3702"/>
    <lineage>
        <taxon>Eukaryota</taxon>
        <taxon>Viridiplantae</taxon>
        <taxon>Streptophyta</taxon>
        <taxon>Embryophyta</taxon>
        <taxon>Tracheophyta</taxon>
        <taxon>Spermatophyta</taxon>
        <taxon>Magnoliopsida</taxon>
        <taxon>eudicotyledons</taxon>
        <taxon>Gunneridae</taxon>
        <taxon>Pentapetalae</taxon>
        <taxon>rosids</taxon>
        <taxon>malvids</taxon>
        <taxon>Brassicales</taxon>
        <taxon>Brassicaceae</taxon>
        <taxon>Camelineae</taxon>
        <taxon>Arabidopsis</taxon>
    </lineage>
</organism>